<gene>
    <name evidence="1" type="primary">eno</name>
    <name type="ordered locus">BAbS19_I10730</name>
</gene>
<proteinExistence type="inferred from homology"/>
<feature type="chain" id="PRO_1000115835" description="Enolase">
    <location>
        <begin position="1"/>
        <end position="425"/>
    </location>
</feature>
<feature type="active site" description="Proton donor" evidence="1">
    <location>
        <position position="204"/>
    </location>
</feature>
<feature type="active site" description="Proton acceptor" evidence="1">
    <location>
        <position position="336"/>
    </location>
</feature>
<feature type="binding site" evidence="1">
    <location>
        <position position="162"/>
    </location>
    <ligand>
        <name>(2R)-2-phosphoglycerate</name>
        <dbReference type="ChEBI" id="CHEBI:58289"/>
    </ligand>
</feature>
<feature type="binding site" evidence="1">
    <location>
        <position position="241"/>
    </location>
    <ligand>
        <name>Mg(2+)</name>
        <dbReference type="ChEBI" id="CHEBI:18420"/>
    </ligand>
</feature>
<feature type="binding site" evidence="1">
    <location>
        <position position="284"/>
    </location>
    <ligand>
        <name>Mg(2+)</name>
        <dbReference type="ChEBI" id="CHEBI:18420"/>
    </ligand>
</feature>
<feature type="binding site" evidence="1">
    <location>
        <position position="311"/>
    </location>
    <ligand>
        <name>Mg(2+)</name>
        <dbReference type="ChEBI" id="CHEBI:18420"/>
    </ligand>
</feature>
<feature type="binding site" evidence="1">
    <location>
        <position position="336"/>
    </location>
    <ligand>
        <name>(2R)-2-phosphoglycerate</name>
        <dbReference type="ChEBI" id="CHEBI:58289"/>
    </ligand>
</feature>
<feature type="binding site" evidence="1">
    <location>
        <position position="365"/>
    </location>
    <ligand>
        <name>(2R)-2-phosphoglycerate</name>
        <dbReference type="ChEBI" id="CHEBI:58289"/>
    </ligand>
</feature>
<feature type="binding site" evidence="1">
    <location>
        <position position="366"/>
    </location>
    <ligand>
        <name>(2R)-2-phosphoglycerate</name>
        <dbReference type="ChEBI" id="CHEBI:58289"/>
    </ligand>
</feature>
<feature type="binding site" evidence="1">
    <location>
        <position position="387"/>
    </location>
    <ligand>
        <name>(2R)-2-phosphoglycerate</name>
        <dbReference type="ChEBI" id="CHEBI:58289"/>
    </ligand>
</feature>
<protein>
    <recommendedName>
        <fullName evidence="1">Enolase</fullName>
        <ecNumber evidence="1">4.2.1.11</ecNumber>
    </recommendedName>
    <alternativeName>
        <fullName evidence="1">2-phospho-D-glycerate hydro-lyase</fullName>
    </alternativeName>
    <alternativeName>
        <fullName evidence="1">2-phosphoglycerate dehydratase</fullName>
    </alternativeName>
</protein>
<reference key="1">
    <citation type="journal article" date="2008" name="PLoS ONE">
        <title>Genome sequence of Brucella abortus vaccine strain S19 compared to virulent strains yields candidate virulence genes.</title>
        <authorList>
            <person name="Crasta O.R."/>
            <person name="Folkerts O."/>
            <person name="Fei Z."/>
            <person name="Mane S.P."/>
            <person name="Evans C."/>
            <person name="Martino-Catt S."/>
            <person name="Bricker B."/>
            <person name="Yu G."/>
            <person name="Du L."/>
            <person name="Sobral B.W."/>
        </authorList>
    </citation>
    <scope>NUCLEOTIDE SEQUENCE [LARGE SCALE GENOMIC DNA]</scope>
    <source>
        <strain>S19</strain>
    </source>
</reference>
<organism>
    <name type="scientific">Brucella abortus (strain S19)</name>
    <dbReference type="NCBI Taxonomy" id="430066"/>
    <lineage>
        <taxon>Bacteria</taxon>
        <taxon>Pseudomonadati</taxon>
        <taxon>Pseudomonadota</taxon>
        <taxon>Alphaproteobacteria</taxon>
        <taxon>Hyphomicrobiales</taxon>
        <taxon>Brucellaceae</taxon>
        <taxon>Brucella/Ochrobactrum group</taxon>
        <taxon>Brucella</taxon>
    </lineage>
</organism>
<sequence>MTAIIDIVGREILDSRGNPTVEVDVVLEDGSFGRAAVPSGASTGAHEAVELRDGGSRYLGKGVEKAVEVVNGKIFDAIAGMDAESQLLIDQTLIDLDGSANKGNLGANAILGVSLAVAKAAAQASGLPLYRYVGGTNAHVLPVPMMNIINGGAHADNPIDFQEFMILPVGATSIREAVRYGSEVFHTLKKRLKDAGHNTNVGDEGGFAPNLKNAQAALDFIMESIEKAGFKPGEDIALGLDCAATEFFKDGNYVYEGERKTRDPKAQAKYLAKLASDYPIVTIEDGMAEDDWEGWKYLTDLIGNKCQLVGDDLFVTNSARLRDGIRLGVANSILVKVNQIGSLSETLDAVETAHKAGYTAVMSHRSGETEDSTIADLAVATNCGQIKTGSLARSDRTAKYNQLIRIEEELGKQARYAGRSALKLL</sequence>
<name>ENO_BRUA1</name>
<accession>B2S5Y3</accession>
<evidence type="ECO:0000255" key="1">
    <source>
        <dbReference type="HAMAP-Rule" id="MF_00318"/>
    </source>
</evidence>
<keyword id="KW-0963">Cytoplasm</keyword>
<keyword id="KW-0324">Glycolysis</keyword>
<keyword id="KW-0456">Lyase</keyword>
<keyword id="KW-0460">Magnesium</keyword>
<keyword id="KW-0479">Metal-binding</keyword>
<keyword id="KW-0964">Secreted</keyword>
<dbReference type="EC" id="4.2.1.11" evidence="1"/>
<dbReference type="EMBL" id="CP000887">
    <property type="protein sequence ID" value="ACD72580.1"/>
    <property type="molecule type" value="Genomic_DNA"/>
</dbReference>
<dbReference type="RefSeq" id="WP_002964261.1">
    <property type="nucleotide sequence ID" value="NC_010742.1"/>
</dbReference>
<dbReference type="SMR" id="B2S5Y3"/>
<dbReference type="GeneID" id="97533615"/>
<dbReference type="KEGG" id="bmc:BAbS19_I10730"/>
<dbReference type="HOGENOM" id="CLU_031223_2_1_5"/>
<dbReference type="UniPathway" id="UPA00109">
    <property type="reaction ID" value="UER00187"/>
</dbReference>
<dbReference type="Proteomes" id="UP000002565">
    <property type="component" value="Chromosome 1"/>
</dbReference>
<dbReference type="GO" id="GO:0009986">
    <property type="term" value="C:cell surface"/>
    <property type="evidence" value="ECO:0007669"/>
    <property type="project" value="UniProtKB-SubCell"/>
</dbReference>
<dbReference type="GO" id="GO:0005576">
    <property type="term" value="C:extracellular region"/>
    <property type="evidence" value="ECO:0007669"/>
    <property type="project" value="UniProtKB-SubCell"/>
</dbReference>
<dbReference type="GO" id="GO:0000015">
    <property type="term" value="C:phosphopyruvate hydratase complex"/>
    <property type="evidence" value="ECO:0007669"/>
    <property type="project" value="InterPro"/>
</dbReference>
<dbReference type="GO" id="GO:0000287">
    <property type="term" value="F:magnesium ion binding"/>
    <property type="evidence" value="ECO:0007669"/>
    <property type="project" value="UniProtKB-UniRule"/>
</dbReference>
<dbReference type="GO" id="GO:0004634">
    <property type="term" value="F:phosphopyruvate hydratase activity"/>
    <property type="evidence" value="ECO:0007669"/>
    <property type="project" value="UniProtKB-UniRule"/>
</dbReference>
<dbReference type="GO" id="GO:0006096">
    <property type="term" value="P:glycolytic process"/>
    <property type="evidence" value="ECO:0007669"/>
    <property type="project" value="UniProtKB-UniRule"/>
</dbReference>
<dbReference type="CDD" id="cd03313">
    <property type="entry name" value="enolase"/>
    <property type="match status" value="1"/>
</dbReference>
<dbReference type="FunFam" id="3.20.20.120:FF:000001">
    <property type="entry name" value="Enolase"/>
    <property type="match status" value="1"/>
</dbReference>
<dbReference type="FunFam" id="3.30.390.10:FF:000001">
    <property type="entry name" value="Enolase"/>
    <property type="match status" value="1"/>
</dbReference>
<dbReference type="Gene3D" id="3.20.20.120">
    <property type="entry name" value="Enolase-like C-terminal domain"/>
    <property type="match status" value="1"/>
</dbReference>
<dbReference type="Gene3D" id="3.30.390.10">
    <property type="entry name" value="Enolase-like, N-terminal domain"/>
    <property type="match status" value="1"/>
</dbReference>
<dbReference type="HAMAP" id="MF_00318">
    <property type="entry name" value="Enolase"/>
    <property type="match status" value="1"/>
</dbReference>
<dbReference type="InterPro" id="IPR000941">
    <property type="entry name" value="Enolase"/>
</dbReference>
<dbReference type="InterPro" id="IPR036849">
    <property type="entry name" value="Enolase-like_C_sf"/>
</dbReference>
<dbReference type="InterPro" id="IPR029017">
    <property type="entry name" value="Enolase-like_N"/>
</dbReference>
<dbReference type="InterPro" id="IPR020810">
    <property type="entry name" value="Enolase_C"/>
</dbReference>
<dbReference type="InterPro" id="IPR020809">
    <property type="entry name" value="Enolase_CS"/>
</dbReference>
<dbReference type="InterPro" id="IPR020811">
    <property type="entry name" value="Enolase_N"/>
</dbReference>
<dbReference type="NCBIfam" id="TIGR01060">
    <property type="entry name" value="eno"/>
    <property type="match status" value="1"/>
</dbReference>
<dbReference type="PANTHER" id="PTHR11902">
    <property type="entry name" value="ENOLASE"/>
    <property type="match status" value="1"/>
</dbReference>
<dbReference type="PANTHER" id="PTHR11902:SF1">
    <property type="entry name" value="ENOLASE"/>
    <property type="match status" value="1"/>
</dbReference>
<dbReference type="Pfam" id="PF00113">
    <property type="entry name" value="Enolase_C"/>
    <property type="match status" value="1"/>
</dbReference>
<dbReference type="Pfam" id="PF03952">
    <property type="entry name" value="Enolase_N"/>
    <property type="match status" value="1"/>
</dbReference>
<dbReference type="PIRSF" id="PIRSF001400">
    <property type="entry name" value="Enolase"/>
    <property type="match status" value="1"/>
</dbReference>
<dbReference type="PRINTS" id="PR00148">
    <property type="entry name" value="ENOLASE"/>
</dbReference>
<dbReference type="SFLD" id="SFLDF00002">
    <property type="entry name" value="enolase"/>
    <property type="match status" value="1"/>
</dbReference>
<dbReference type="SFLD" id="SFLDG00178">
    <property type="entry name" value="enolase"/>
    <property type="match status" value="1"/>
</dbReference>
<dbReference type="SMART" id="SM01192">
    <property type="entry name" value="Enolase_C"/>
    <property type="match status" value="1"/>
</dbReference>
<dbReference type="SMART" id="SM01193">
    <property type="entry name" value="Enolase_N"/>
    <property type="match status" value="1"/>
</dbReference>
<dbReference type="SUPFAM" id="SSF51604">
    <property type="entry name" value="Enolase C-terminal domain-like"/>
    <property type="match status" value="1"/>
</dbReference>
<dbReference type="SUPFAM" id="SSF54826">
    <property type="entry name" value="Enolase N-terminal domain-like"/>
    <property type="match status" value="1"/>
</dbReference>
<dbReference type="PROSITE" id="PS00164">
    <property type="entry name" value="ENOLASE"/>
    <property type="match status" value="1"/>
</dbReference>
<comment type="function">
    <text evidence="1">Catalyzes the reversible conversion of 2-phosphoglycerate (2-PG) into phosphoenolpyruvate (PEP). It is essential for the degradation of carbohydrates via glycolysis.</text>
</comment>
<comment type="catalytic activity">
    <reaction evidence="1">
        <text>(2R)-2-phosphoglycerate = phosphoenolpyruvate + H2O</text>
        <dbReference type="Rhea" id="RHEA:10164"/>
        <dbReference type="ChEBI" id="CHEBI:15377"/>
        <dbReference type="ChEBI" id="CHEBI:58289"/>
        <dbReference type="ChEBI" id="CHEBI:58702"/>
        <dbReference type="EC" id="4.2.1.11"/>
    </reaction>
</comment>
<comment type="cofactor">
    <cofactor evidence="1">
        <name>Mg(2+)</name>
        <dbReference type="ChEBI" id="CHEBI:18420"/>
    </cofactor>
    <text evidence="1">Binds a second Mg(2+) ion via substrate during catalysis.</text>
</comment>
<comment type="pathway">
    <text evidence="1">Carbohydrate degradation; glycolysis; pyruvate from D-glyceraldehyde 3-phosphate: step 4/5.</text>
</comment>
<comment type="subcellular location">
    <subcellularLocation>
        <location evidence="1">Cytoplasm</location>
    </subcellularLocation>
    <subcellularLocation>
        <location evidence="1">Secreted</location>
    </subcellularLocation>
    <subcellularLocation>
        <location evidence="1">Cell surface</location>
    </subcellularLocation>
    <text evidence="1">Fractions of enolase are present in both the cytoplasm and on the cell surface.</text>
</comment>
<comment type="similarity">
    <text evidence="1">Belongs to the enolase family.</text>
</comment>